<gene>
    <name evidence="1" type="primary">purT</name>
    <name type="ordered locus">SF1859</name>
    <name type="ordered locus">S1925</name>
</gene>
<name>PURT_SHIFL</name>
<organism>
    <name type="scientific">Shigella flexneri</name>
    <dbReference type="NCBI Taxonomy" id="623"/>
    <lineage>
        <taxon>Bacteria</taxon>
        <taxon>Pseudomonadati</taxon>
        <taxon>Pseudomonadota</taxon>
        <taxon>Gammaproteobacteria</taxon>
        <taxon>Enterobacterales</taxon>
        <taxon>Enterobacteriaceae</taxon>
        <taxon>Shigella</taxon>
    </lineage>
</organism>
<feature type="chain" id="PRO_0000319240" description="Formate-dependent phosphoribosylglycinamide formyltransferase">
    <location>
        <begin position="1"/>
        <end position="392"/>
    </location>
</feature>
<feature type="domain" description="ATP-grasp" evidence="1">
    <location>
        <begin position="119"/>
        <end position="308"/>
    </location>
</feature>
<feature type="binding site" evidence="1">
    <location>
        <begin position="22"/>
        <end position="23"/>
    </location>
    <ligand>
        <name>N(1)-(5-phospho-beta-D-ribosyl)glycinamide</name>
        <dbReference type="ChEBI" id="CHEBI:143788"/>
    </ligand>
</feature>
<feature type="binding site" evidence="1">
    <location>
        <position position="82"/>
    </location>
    <ligand>
        <name>N(1)-(5-phospho-beta-D-ribosyl)glycinamide</name>
        <dbReference type="ChEBI" id="CHEBI:143788"/>
    </ligand>
</feature>
<feature type="binding site" evidence="1">
    <location>
        <position position="114"/>
    </location>
    <ligand>
        <name>ATP</name>
        <dbReference type="ChEBI" id="CHEBI:30616"/>
    </ligand>
</feature>
<feature type="binding site" evidence="1">
    <location>
        <position position="155"/>
    </location>
    <ligand>
        <name>ATP</name>
        <dbReference type="ChEBI" id="CHEBI:30616"/>
    </ligand>
</feature>
<feature type="binding site" evidence="1">
    <location>
        <begin position="160"/>
        <end position="165"/>
    </location>
    <ligand>
        <name>ATP</name>
        <dbReference type="ChEBI" id="CHEBI:30616"/>
    </ligand>
</feature>
<feature type="binding site" evidence="1">
    <location>
        <begin position="195"/>
        <end position="198"/>
    </location>
    <ligand>
        <name>ATP</name>
        <dbReference type="ChEBI" id="CHEBI:30616"/>
    </ligand>
</feature>
<feature type="binding site" evidence="1">
    <location>
        <position position="203"/>
    </location>
    <ligand>
        <name>ATP</name>
        <dbReference type="ChEBI" id="CHEBI:30616"/>
    </ligand>
</feature>
<feature type="binding site" evidence="1">
    <location>
        <position position="267"/>
    </location>
    <ligand>
        <name>Mg(2+)</name>
        <dbReference type="ChEBI" id="CHEBI:18420"/>
    </ligand>
</feature>
<feature type="binding site" evidence="1">
    <location>
        <position position="279"/>
    </location>
    <ligand>
        <name>Mg(2+)</name>
        <dbReference type="ChEBI" id="CHEBI:18420"/>
    </ligand>
</feature>
<feature type="binding site" evidence="1">
    <location>
        <position position="286"/>
    </location>
    <ligand>
        <name>N(1)-(5-phospho-beta-D-ribosyl)glycinamide</name>
        <dbReference type="ChEBI" id="CHEBI:143788"/>
    </ligand>
</feature>
<feature type="binding site" evidence="1">
    <location>
        <position position="355"/>
    </location>
    <ligand>
        <name>N(1)-(5-phospho-beta-D-ribosyl)glycinamide</name>
        <dbReference type="ChEBI" id="CHEBI:143788"/>
    </ligand>
</feature>
<feature type="binding site" evidence="1">
    <location>
        <begin position="362"/>
        <end position="363"/>
    </location>
    <ligand>
        <name>N(1)-(5-phospho-beta-D-ribosyl)glycinamide</name>
        <dbReference type="ChEBI" id="CHEBI:143788"/>
    </ligand>
</feature>
<feature type="sequence conflict" description="In Ref. 2; AAP17240." evidence="2" ref="2">
    <original>R</original>
    <variation>H</variation>
    <location>
        <position position="363"/>
    </location>
</feature>
<proteinExistence type="inferred from homology"/>
<comment type="function">
    <text evidence="1">Involved in the de novo purine biosynthesis. Catalyzes the transfer of formate to 5-phospho-ribosyl-glycinamide (GAR), producing 5-phospho-ribosyl-N-formylglycinamide (FGAR). Formate is provided by PurU via hydrolysis of 10-formyl-tetrahydrofolate.</text>
</comment>
<comment type="catalytic activity">
    <reaction evidence="1">
        <text>N(1)-(5-phospho-beta-D-ribosyl)glycinamide + formate + ATP = N(2)-formyl-N(1)-(5-phospho-beta-D-ribosyl)glycinamide + ADP + phosphate + H(+)</text>
        <dbReference type="Rhea" id="RHEA:24829"/>
        <dbReference type="ChEBI" id="CHEBI:15378"/>
        <dbReference type="ChEBI" id="CHEBI:15740"/>
        <dbReference type="ChEBI" id="CHEBI:30616"/>
        <dbReference type="ChEBI" id="CHEBI:43474"/>
        <dbReference type="ChEBI" id="CHEBI:143788"/>
        <dbReference type="ChEBI" id="CHEBI:147286"/>
        <dbReference type="ChEBI" id="CHEBI:456216"/>
        <dbReference type="EC" id="6.3.1.21"/>
    </reaction>
    <physiologicalReaction direction="left-to-right" evidence="1">
        <dbReference type="Rhea" id="RHEA:24830"/>
    </physiologicalReaction>
</comment>
<comment type="pathway">
    <text evidence="1">Purine metabolism; IMP biosynthesis via de novo pathway; N(2)-formyl-N(1)-(5-phospho-D-ribosyl)glycinamide from N(1)-(5-phospho-D-ribosyl)glycinamide (formate route): step 1/1.</text>
</comment>
<comment type="subunit">
    <text evidence="1">Homodimer.</text>
</comment>
<comment type="similarity">
    <text evidence="1">Belongs to the PurK/PurT family.</text>
</comment>
<dbReference type="EC" id="6.3.1.21" evidence="1"/>
<dbReference type="EMBL" id="AE005674">
    <property type="protein sequence ID" value="AAN43417.1"/>
    <property type="molecule type" value="Genomic_DNA"/>
</dbReference>
<dbReference type="EMBL" id="AE014073">
    <property type="protein sequence ID" value="AAP17240.1"/>
    <property type="molecule type" value="Genomic_DNA"/>
</dbReference>
<dbReference type="RefSeq" id="NP_707710.1">
    <property type="nucleotide sequence ID" value="NC_004337.2"/>
</dbReference>
<dbReference type="RefSeq" id="WP_000173488.1">
    <property type="nucleotide sequence ID" value="NZ_WHSI01000055.1"/>
</dbReference>
<dbReference type="SMR" id="Q83KS0"/>
<dbReference type="STRING" id="198214.SF1859"/>
<dbReference type="PaxDb" id="198214-SF1859"/>
<dbReference type="GeneID" id="1025071"/>
<dbReference type="KEGG" id="sfl:SF1859"/>
<dbReference type="KEGG" id="sfx:S1925"/>
<dbReference type="PATRIC" id="fig|198214.7.peg.2215"/>
<dbReference type="HOGENOM" id="CLU_011534_1_3_6"/>
<dbReference type="UniPathway" id="UPA00074">
    <property type="reaction ID" value="UER00127"/>
</dbReference>
<dbReference type="Proteomes" id="UP000001006">
    <property type="component" value="Chromosome"/>
</dbReference>
<dbReference type="Proteomes" id="UP000002673">
    <property type="component" value="Chromosome"/>
</dbReference>
<dbReference type="GO" id="GO:0005829">
    <property type="term" value="C:cytosol"/>
    <property type="evidence" value="ECO:0007669"/>
    <property type="project" value="TreeGrafter"/>
</dbReference>
<dbReference type="GO" id="GO:0005524">
    <property type="term" value="F:ATP binding"/>
    <property type="evidence" value="ECO:0007669"/>
    <property type="project" value="UniProtKB-UniRule"/>
</dbReference>
<dbReference type="GO" id="GO:0000287">
    <property type="term" value="F:magnesium ion binding"/>
    <property type="evidence" value="ECO:0007669"/>
    <property type="project" value="InterPro"/>
</dbReference>
<dbReference type="GO" id="GO:0043815">
    <property type="term" value="F:phosphoribosylglycinamide formyltransferase 2 activity"/>
    <property type="evidence" value="ECO:0007669"/>
    <property type="project" value="UniProtKB-UniRule"/>
</dbReference>
<dbReference type="GO" id="GO:0004644">
    <property type="term" value="F:phosphoribosylglycinamide formyltransferase activity"/>
    <property type="evidence" value="ECO:0007669"/>
    <property type="project" value="InterPro"/>
</dbReference>
<dbReference type="GO" id="GO:0006189">
    <property type="term" value="P:'de novo' IMP biosynthetic process"/>
    <property type="evidence" value="ECO:0007669"/>
    <property type="project" value="UniProtKB-UniRule"/>
</dbReference>
<dbReference type="FunFam" id="3.30.1490.20:FF:000013">
    <property type="entry name" value="Formate-dependent phosphoribosylglycinamide formyltransferase"/>
    <property type="match status" value="1"/>
</dbReference>
<dbReference type="FunFam" id="3.30.470.20:FF:000027">
    <property type="entry name" value="Formate-dependent phosphoribosylglycinamide formyltransferase"/>
    <property type="match status" value="1"/>
</dbReference>
<dbReference type="FunFam" id="3.40.50.20:FF:000007">
    <property type="entry name" value="Formate-dependent phosphoribosylglycinamide formyltransferase"/>
    <property type="match status" value="1"/>
</dbReference>
<dbReference type="Gene3D" id="3.40.50.20">
    <property type="match status" value="1"/>
</dbReference>
<dbReference type="Gene3D" id="3.30.1490.20">
    <property type="entry name" value="ATP-grasp fold, A domain"/>
    <property type="match status" value="1"/>
</dbReference>
<dbReference type="Gene3D" id="3.30.470.20">
    <property type="entry name" value="ATP-grasp fold, B domain"/>
    <property type="match status" value="1"/>
</dbReference>
<dbReference type="HAMAP" id="MF_01643">
    <property type="entry name" value="PurT"/>
    <property type="match status" value="1"/>
</dbReference>
<dbReference type="InterPro" id="IPR011761">
    <property type="entry name" value="ATP-grasp"/>
</dbReference>
<dbReference type="InterPro" id="IPR003135">
    <property type="entry name" value="ATP-grasp_carboxylate-amine"/>
</dbReference>
<dbReference type="InterPro" id="IPR013815">
    <property type="entry name" value="ATP_grasp_subdomain_1"/>
</dbReference>
<dbReference type="InterPro" id="IPR016185">
    <property type="entry name" value="PreATP-grasp_dom_sf"/>
</dbReference>
<dbReference type="InterPro" id="IPR005862">
    <property type="entry name" value="PurT"/>
</dbReference>
<dbReference type="InterPro" id="IPR054350">
    <property type="entry name" value="PurT/PurK_preATP-grasp"/>
</dbReference>
<dbReference type="InterPro" id="IPR048740">
    <property type="entry name" value="PurT_C"/>
</dbReference>
<dbReference type="InterPro" id="IPR011054">
    <property type="entry name" value="Rudment_hybrid_motif"/>
</dbReference>
<dbReference type="NCBIfam" id="NF006766">
    <property type="entry name" value="PRK09288.1"/>
    <property type="match status" value="1"/>
</dbReference>
<dbReference type="NCBIfam" id="TIGR01142">
    <property type="entry name" value="purT"/>
    <property type="match status" value="1"/>
</dbReference>
<dbReference type="PANTHER" id="PTHR43055">
    <property type="entry name" value="FORMATE-DEPENDENT PHOSPHORIBOSYLGLYCINAMIDE FORMYLTRANSFERASE"/>
    <property type="match status" value="1"/>
</dbReference>
<dbReference type="PANTHER" id="PTHR43055:SF1">
    <property type="entry name" value="FORMATE-DEPENDENT PHOSPHORIBOSYLGLYCINAMIDE FORMYLTRANSFERASE"/>
    <property type="match status" value="1"/>
</dbReference>
<dbReference type="Pfam" id="PF02222">
    <property type="entry name" value="ATP-grasp"/>
    <property type="match status" value="1"/>
</dbReference>
<dbReference type="Pfam" id="PF21244">
    <property type="entry name" value="PurT_C"/>
    <property type="match status" value="1"/>
</dbReference>
<dbReference type="Pfam" id="PF22660">
    <property type="entry name" value="RS_preATP-grasp-like"/>
    <property type="match status" value="1"/>
</dbReference>
<dbReference type="SUPFAM" id="SSF56059">
    <property type="entry name" value="Glutathione synthetase ATP-binding domain-like"/>
    <property type="match status" value="1"/>
</dbReference>
<dbReference type="SUPFAM" id="SSF52440">
    <property type="entry name" value="PreATP-grasp domain"/>
    <property type="match status" value="1"/>
</dbReference>
<dbReference type="SUPFAM" id="SSF51246">
    <property type="entry name" value="Rudiment single hybrid motif"/>
    <property type="match status" value="1"/>
</dbReference>
<dbReference type="PROSITE" id="PS50975">
    <property type="entry name" value="ATP_GRASP"/>
    <property type="match status" value="1"/>
</dbReference>
<reference key="1">
    <citation type="journal article" date="2002" name="Nucleic Acids Res.">
        <title>Genome sequence of Shigella flexneri 2a: insights into pathogenicity through comparison with genomes of Escherichia coli K12 and O157.</title>
        <authorList>
            <person name="Jin Q."/>
            <person name="Yuan Z."/>
            <person name="Xu J."/>
            <person name="Wang Y."/>
            <person name="Shen Y."/>
            <person name="Lu W."/>
            <person name="Wang J."/>
            <person name="Liu H."/>
            <person name="Yang J."/>
            <person name="Yang F."/>
            <person name="Zhang X."/>
            <person name="Zhang J."/>
            <person name="Yang G."/>
            <person name="Wu H."/>
            <person name="Qu D."/>
            <person name="Dong J."/>
            <person name="Sun L."/>
            <person name="Xue Y."/>
            <person name="Zhao A."/>
            <person name="Gao Y."/>
            <person name="Zhu J."/>
            <person name="Kan B."/>
            <person name="Ding K."/>
            <person name="Chen S."/>
            <person name="Cheng H."/>
            <person name="Yao Z."/>
            <person name="He B."/>
            <person name="Chen R."/>
            <person name="Ma D."/>
            <person name="Qiang B."/>
            <person name="Wen Y."/>
            <person name="Hou Y."/>
            <person name="Yu J."/>
        </authorList>
    </citation>
    <scope>NUCLEOTIDE SEQUENCE [LARGE SCALE GENOMIC DNA]</scope>
    <source>
        <strain>301 / Serotype 2a</strain>
    </source>
</reference>
<reference key="2">
    <citation type="journal article" date="2003" name="Infect. Immun.">
        <title>Complete genome sequence and comparative genomics of Shigella flexneri serotype 2a strain 2457T.</title>
        <authorList>
            <person name="Wei J."/>
            <person name="Goldberg M.B."/>
            <person name="Burland V."/>
            <person name="Venkatesan M.M."/>
            <person name="Deng W."/>
            <person name="Fournier G."/>
            <person name="Mayhew G.F."/>
            <person name="Plunkett G. III"/>
            <person name="Rose D.J."/>
            <person name="Darling A."/>
            <person name="Mau B."/>
            <person name="Perna N.T."/>
            <person name="Payne S.M."/>
            <person name="Runyen-Janecky L.J."/>
            <person name="Zhou S."/>
            <person name="Schwartz D.C."/>
            <person name="Blattner F.R."/>
        </authorList>
    </citation>
    <scope>NUCLEOTIDE SEQUENCE [LARGE SCALE GENOMIC DNA]</scope>
    <source>
        <strain>ATCC 700930 / 2457T / Serotype 2a</strain>
    </source>
</reference>
<sequence length="392" mass="42434">MTLLGTALRPAATRVMLLGSGELGKEVAIECQRLGVEVIAVDRYADAPAMHVAHRSHVINMLDGDALRRVVELEKPHYIVPEIEAIATDMLIQLEEEGLNVVPCARATKLTMNREGIRRLAAEELQLPTSTYRFADSKSLFREAVAAIGYPCIVKPVMSSSGKGQTFIRSAEQLAQAWEYAQQGGRAGAGRVIVEGVVKFDFEITLLTVSAVDGVHFCAPVGHRQEDGDYRESWQPQQMSPLALERAQEIARKVVLALGGYGLFGVELFVCGDEVIFSEVSPRPHDTGMVTLISQDLSEFALHVRAFLGLPVGGIRQYGPAASAVILPQLTSQNVTFDNVQNAVGADLQIRLFGKPEIDGSRRLGVVLATSESVVDAIERAKHAAGQVKVQG</sequence>
<protein>
    <recommendedName>
        <fullName evidence="1">Formate-dependent phosphoribosylglycinamide formyltransferase</fullName>
        <ecNumber evidence="1">6.3.1.21</ecNumber>
    </recommendedName>
    <alternativeName>
        <fullName evidence="1">5'-phosphoribosylglycinamide transformylase 2</fullName>
    </alternativeName>
    <alternativeName>
        <fullName evidence="1">Formate-dependent GAR transformylase</fullName>
    </alternativeName>
    <alternativeName>
        <fullName evidence="1">GAR transformylase 2</fullName>
        <shortName evidence="1">GART 2</shortName>
    </alternativeName>
    <alternativeName>
        <fullName evidence="1">Non-folate glycinamide ribonucleotide transformylase</fullName>
    </alternativeName>
    <alternativeName>
        <fullName evidence="1">Phosphoribosylglycinamide formyltransferase 2</fullName>
    </alternativeName>
</protein>
<keyword id="KW-0067">ATP-binding</keyword>
<keyword id="KW-0436">Ligase</keyword>
<keyword id="KW-0460">Magnesium</keyword>
<keyword id="KW-0479">Metal-binding</keyword>
<keyword id="KW-0547">Nucleotide-binding</keyword>
<keyword id="KW-0658">Purine biosynthesis</keyword>
<keyword id="KW-1185">Reference proteome</keyword>
<evidence type="ECO:0000255" key="1">
    <source>
        <dbReference type="HAMAP-Rule" id="MF_01643"/>
    </source>
</evidence>
<evidence type="ECO:0000305" key="2"/>
<accession>Q83KS0</accession>
<accession>Q7UAF4</accession>